<proteinExistence type="uncertain"/>
<accession>A0A023PZK9</accession>
<protein>
    <recommendedName>
        <fullName evidence="2">Putative uncharacterized membrane protein YLR458W</fullName>
    </recommendedName>
</protein>
<gene>
    <name evidence="4" type="ordered locus">YLR458W</name>
</gene>
<dbReference type="EMBL" id="KJ412284">
    <property type="protein sequence ID" value="AHX39327.1"/>
    <property type="molecule type" value="Genomic_DNA"/>
</dbReference>
<dbReference type="PIR" id="S69324">
    <property type="entry name" value="S69324"/>
</dbReference>
<dbReference type="PaxDb" id="4932-YLR458W"/>
<dbReference type="EnsemblFungi" id="YLR458W_mRNA">
    <property type="protein sequence ID" value="YLR458W"/>
    <property type="gene ID" value="YLR458W"/>
</dbReference>
<dbReference type="AGR" id="SGD:S000004450"/>
<dbReference type="SGD" id="S000004450">
    <property type="gene designation" value="YLR458W"/>
</dbReference>
<dbReference type="HOGENOM" id="CLU_1983302_0_0_1"/>
<dbReference type="GO" id="GO:0016020">
    <property type="term" value="C:membrane"/>
    <property type="evidence" value="ECO:0007669"/>
    <property type="project" value="UniProtKB-SubCell"/>
</dbReference>
<feature type="chain" id="PRO_0000431047" description="Putative uncharacterized membrane protein YLR458W">
    <location>
        <begin position="1"/>
        <end position="126"/>
    </location>
</feature>
<feature type="transmembrane region" description="Helical; Name=1" evidence="1">
    <location>
        <begin position="21"/>
        <end position="43"/>
    </location>
</feature>
<feature type="transmembrane region" description="Helical; Name=2" evidence="1">
    <location>
        <begin position="48"/>
        <end position="70"/>
    </location>
</feature>
<name>YL458_YEAST</name>
<reference key="1">
    <citation type="journal article" date="1997" name="Nature">
        <title>The nucleotide sequence of Saccharomyces cerevisiae chromosome XII.</title>
        <authorList>
            <person name="Johnston M."/>
            <person name="Hillier L.W."/>
            <person name="Riles L."/>
            <person name="Albermann K."/>
            <person name="Andre B."/>
            <person name="Ansorge W."/>
            <person name="Benes V."/>
            <person name="Brueckner M."/>
            <person name="Delius H."/>
            <person name="Dubois E."/>
            <person name="Duesterhoeft A."/>
            <person name="Entian K.-D."/>
            <person name="Floeth M."/>
            <person name="Goffeau A."/>
            <person name="Hebling U."/>
            <person name="Heumann K."/>
            <person name="Heuss-Neitzel D."/>
            <person name="Hilbert H."/>
            <person name="Hilger F."/>
            <person name="Kleine K."/>
            <person name="Koetter P."/>
            <person name="Louis E.J."/>
            <person name="Messenguy F."/>
            <person name="Mewes H.-W."/>
            <person name="Miosga T."/>
            <person name="Moestl D."/>
            <person name="Mueller-Auer S."/>
            <person name="Nentwich U."/>
            <person name="Obermaier B."/>
            <person name="Piravandi E."/>
            <person name="Pohl T.M."/>
            <person name="Portetelle D."/>
            <person name="Purnelle B."/>
            <person name="Rechmann S."/>
            <person name="Rieger M."/>
            <person name="Rinke M."/>
            <person name="Rose M."/>
            <person name="Scharfe M."/>
            <person name="Scherens B."/>
            <person name="Scholler P."/>
            <person name="Schwager C."/>
            <person name="Schwarz S."/>
            <person name="Underwood A.P."/>
            <person name="Urrestarazu L.A."/>
            <person name="Vandenbol M."/>
            <person name="Verhasselt P."/>
            <person name="Vierendeels F."/>
            <person name="Voet M."/>
            <person name="Volckaert G."/>
            <person name="Voss H."/>
            <person name="Wambutt R."/>
            <person name="Wedler E."/>
            <person name="Wedler H."/>
            <person name="Zimmermann F.K."/>
            <person name="Zollner A."/>
            <person name="Hani J."/>
            <person name="Hoheisel J.D."/>
        </authorList>
    </citation>
    <scope>NUCLEOTIDE SEQUENCE [LARGE SCALE GENOMIC DNA]</scope>
    <source>
        <strain>ATCC 204508 / S288c</strain>
    </source>
</reference>
<reference key="2">
    <citation type="journal article" date="2014" name="G3 (Bethesda)">
        <title>The reference genome sequence of Saccharomyces cerevisiae: Then and now.</title>
        <authorList>
            <person name="Engel S.R."/>
            <person name="Dietrich F.S."/>
            <person name="Fisk D.G."/>
            <person name="Binkley G."/>
            <person name="Balakrishnan R."/>
            <person name="Costanzo M.C."/>
            <person name="Dwight S.S."/>
            <person name="Hitz B.C."/>
            <person name="Karra K."/>
            <person name="Nash R.S."/>
            <person name="Weng S."/>
            <person name="Wong E.D."/>
            <person name="Lloyd P."/>
            <person name="Skrzypek M.S."/>
            <person name="Miyasato S.R."/>
            <person name="Simison M."/>
            <person name="Cherry J.M."/>
        </authorList>
    </citation>
    <scope>GENOME REANNOTATION</scope>
    <source>
        <strain>ATCC 204508 / S288c</strain>
    </source>
</reference>
<comment type="subcellular location">
    <subcellularLocation>
        <location evidence="1">Membrane</location>
        <topology evidence="1">Multi-pass membrane protein</topology>
    </subcellularLocation>
</comment>
<comment type="miscellaneous">
    <text evidence="2">Partially overlaps NBP1.</text>
</comment>
<comment type="caution">
    <text evidence="3">Product of a dubious gene prediction unlikely to encode a functional protein. Because of that it is not part of the S.cerevisiae S288c complete/reference proteome set.</text>
</comment>
<keyword id="KW-0472">Membrane</keyword>
<keyword id="KW-0812">Transmembrane</keyword>
<keyword id="KW-1133">Transmembrane helix</keyword>
<sequence length="126" mass="14447">MSPQTFCILLIFSLSLEKTSLIVWNIFVNLRLGVFLLLVRIFSSVFLSVTFLGLFRTLLPVGRICFLLLLKADRFLTSSRDPYSRFLPSSRIPKKSFHSPCTDFSILPMSIIVPFSSEYLLVHVQQ</sequence>
<evidence type="ECO:0000255" key="1"/>
<evidence type="ECO:0000305" key="2"/>
<evidence type="ECO:0000305" key="3">
    <source>
    </source>
</evidence>
<evidence type="ECO:0000312" key="4">
    <source>
        <dbReference type="SGD" id="S000004450"/>
    </source>
</evidence>
<organism>
    <name type="scientific">Saccharomyces cerevisiae (strain ATCC 204508 / S288c)</name>
    <name type="common">Baker's yeast</name>
    <dbReference type="NCBI Taxonomy" id="559292"/>
    <lineage>
        <taxon>Eukaryota</taxon>
        <taxon>Fungi</taxon>
        <taxon>Dikarya</taxon>
        <taxon>Ascomycota</taxon>
        <taxon>Saccharomycotina</taxon>
        <taxon>Saccharomycetes</taxon>
        <taxon>Saccharomycetales</taxon>
        <taxon>Saccharomycetaceae</taxon>
        <taxon>Saccharomyces</taxon>
    </lineage>
</organism>